<accession>A6UR83</accession>
<proteinExistence type="inferred from homology"/>
<protein>
    <recommendedName>
        <fullName evidence="1">Large ribosomal subunit protein eL21</fullName>
    </recommendedName>
    <alternativeName>
        <fullName evidence="2">50S ribosomal protein L21e</fullName>
    </alternativeName>
</protein>
<sequence length="97" mass="11071">MQKSEGFRSKTRYKLSKHPRQKGLFPLTRALKCYTEGDTVHVVIDPSVQKGMPHPKFHGKTGTVVSQRGRAFLVRVKDGGKYKDIIARPQHLRESKL</sequence>
<feature type="chain" id="PRO_1000007126" description="Large ribosomal subunit protein eL21">
    <location>
        <begin position="1"/>
        <end position="97"/>
    </location>
</feature>
<name>RL21_METVS</name>
<gene>
    <name evidence="1" type="primary">rpl21e</name>
    <name type="ordered locus">Mevan_1105</name>
</gene>
<comment type="similarity">
    <text evidence="1">Belongs to the eukaryotic ribosomal protein eL21 family.</text>
</comment>
<evidence type="ECO:0000255" key="1">
    <source>
        <dbReference type="HAMAP-Rule" id="MF_00369"/>
    </source>
</evidence>
<evidence type="ECO:0000305" key="2"/>
<keyword id="KW-0687">Ribonucleoprotein</keyword>
<keyword id="KW-0689">Ribosomal protein</keyword>
<reference key="1">
    <citation type="submission" date="2007-06" db="EMBL/GenBank/DDBJ databases">
        <title>Complete sequence of Methanococcus vannielii SB.</title>
        <authorList>
            <consortium name="US DOE Joint Genome Institute"/>
            <person name="Copeland A."/>
            <person name="Lucas S."/>
            <person name="Lapidus A."/>
            <person name="Barry K."/>
            <person name="Glavina del Rio T."/>
            <person name="Dalin E."/>
            <person name="Tice H."/>
            <person name="Pitluck S."/>
            <person name="Chain P."/>
            <person name="Malfatti S."/>
            <person name="Shin M."/>
            <person name="Vergez L."/>
            <person name="Schmutz J."/>
            <person name="Larimer F."/>
            <person name="Land M."/>
            <person name="Hauser L."/>
            <person name="Kyrpides N."/>
            <person name="Anderson I."/>
            <person name="Sieprawska-Lupa M."/>
            <person name="Whitman W.B."/>
            <person name="Richardson P."/>
        </authorList>
    </citation>
    <scope>NUCLEOTIDE SEQUENCE [LARGE SCALE GENOMIC DNA]</scope>
    <source>
        <strain>ATCC 35089 / DSM 1224 / JCM 13029 / OCM 148 / SB</strain>
    </source>
</reference>
<organism>
    <name type="scientific">Methanococcus vannielii (strain ATCC 35089 / DSM 1224 / JCM 13029 / OCM 148 / SB)</name>
    <dbReference type="NCBI Taxonomy" id="406327"/>
    <lineage>
        <taxon>Archaea</taxon>
        <taxon>Methanobacteriati</taxon>
        <taxon>Methanobacteriota</taxon>
        <taxon>Methanomada group</taxon>
        <taxon>Methanococci</taxon>
        <taxon>Methanococcales</taxon>
        <taxon>Methanococcaceae</taxon>
        <taxon>Methanococcus</taxon>
    </lineage>
</organism>
<dbReference type="EMBL" id="CP000742">
    <property type="protein sequence ID" value="ABR55005.1"/>
    <property type="molecule type" value="Genomic_DNA"/>
</dbReference>
<dbReference type="RefSeq" id="WP_012065920.1">
    <property type="nucleotide sequence ID" value="NC_009634.1"/>
</dbReference>
<dbReference type="SMR" id="A6UR83"/>
<dbReference type="STRING" id="406327.Mevan_1105"/>
<dbReference type="GeneID" id="5324478"/>
<dbReference type="KEGG" id="mvn:Mevan_1105"/>
<dbReference type="eggNOG" id="arCOG04129">
    <property type="taxonomic scope" value="Archaea"/>
</dbReference>
<dbReference type="HOGENOM" id="CLU_103610_1_1_2"/>
<dbReference type="OrthoDB" id="6295at2157"/>
<dbReference type="Proteomes" id="UP000001107">
    <property type="component" value="Chromosome"/>
</dbReference>
<dbReference type="GO" id="GO:1990904">
    <property type="term" value="C:ribonucleoprotein complex"/>
    <property type="evidence" value="ECO:0007669"/>
    <property type="project" value="UniProtKB-KW"/>
</dbReference>
<dbReference type="GO" id="GO:0005840">
    <property type="term" value="C:ribosome"/>
    <property type="evidence" value="ECO:0007669"/>
    <property type="project" value="UniProtKB-KW"/>
</dbReference>
<dbReference type="GO" id="GO:0003735">
    <property type="term" value="F:structural constituent of ribosome"/>
    <property type="evidence" value="ECO:0007669"/>
    <property type="project" value="InterPro"/>
</dbReference>
<dbReference type="GO" id="GO:0006412">
    <property type="term" value="P:translation"/>
    <property type="evidence" value="ECO:0007669"/>
    <property type="project" value="UniProtKB-UniRule"/>
</dbReference>
<dbReference type="FunFam" id="2.30.30.70:FF:000001">
    <property type="entry name" value="60S ribosomal protein L21"/>
    <property type="match status" value="1"/>
</dbReference>
<dbReference type="Gene3D" id="2.30.30.70">
    <property type="entry name" value="Ribosomal protein L21"/>
    <property type="match status" value="1"/>
</dbReference>
<dbReference type="HAMAP" id="MF_00369">
    <property type="entry name" value="Ribosomal_eL21"/>
    <property type="match status" value="1"/>
</dbReference>
<dbReference type="InterPro" id="IPR001147">
    <property type="entry name" value="Ribosomal_eL21"/>
</dbReference>
<dbReference type="InterPro" id="IPR022856">
    <property type="entry name" value="Ribosomal_eL21_arc"/>
</dbReference>
<dbReference type="InterPro" id="IPR018259">
    <property type="entry name" value="Ribosomal_eL21_CS"/>
</dbReference>
<dbReference type="InterPro" id="IPR036948">
    <property type="entry name" value="Ribosomal_eL21_sf"/>
</dbReference>
<dbReference type="InterPro" id="IPR008991">
    <property type="entry name" value="Translation_prot_SH3-like_sf"/>
</dbReference>
<dbReference type="NCBIfam" id="NF003303">
    <property type="entry name" value="PRK04306.1"/>
    <property type="match status" value="1"/>
</dbReference>
<dbReference type="PANTHER" id="PTHR20981">
    <property type="entry name" value="60S RIBOSOMAL PROTEIN L21"/>
    <property type="match status" value="1"/>
</dbReference>
<dbReference type="Pfam" id="PF01157">
    <property type="entry name" value="Ribosomal_L21e"/>
    <property type="match status" value="1"/>
</dbReference>
<dbReference type="SUPFAM" id="SSF50104">
    <property type="entry name" value="Translation proteins SH3-like domain"/>
    <property type="match status" value="1"/>
</dbReference>
<dbReference type="PROSITE" id="PS01171">
    <property type="entry name" value="RIBOSOMAL_L21E"/>
    <property type="match status" value="1"/>
</dbReference>